<name>MNMA_SYNC1</name>
<accession>Q3A3F8</accession>
<evidence type="ECO:0000255" key="1">
    <source>
        <dbReference type="HAMAP-Rule" id="MF_00144"/>
    </source>
</evidence>
<proteinExistence type="inferred from homology"/>
<reference key="1">
    <citation type="submission" date="2005-10" db="EMBL/GenBank/DDBJ databases">
        <title>Complete sequence of Pelobacter carbinolicus DSM 2380.</title>
        <authorList>
            <person name="Copeland A."/>
            <person name="Lucas S."/>
            <person name="Lapidus A."/>
            <person name="Barry K."/>
            <person name="Detter J.C."/>
            <person name="Glavina T."/>
            <person name="Hammon N."/>
            <person name="Israni S."/>
            <person name="Pitluck S."/>
            <person name="Chertkov O."/>
            <person name="Schmutz J."/>
            <person name="Larimer F."/>
            <person name="Land M."/>
            <person name="Kyrpides N."/>
            <person name="Ivanova N."/>
            <person name="Richardson P."/>
        </authorList>
    </citation>
    <scope>NUCLEOTIDE SEQUENCE [LARGE SCALE GENOMIC DNA]</scope>
    <source>
        <strain>DSM 2380 / NBRC 103641 / GraBd1</strain>
    </source>
</reference>
<protein>
    <recommendedName>
        <fullName evidence="1">tRNA-specific 2-thiouridylase MnmA</fullName>
        <ecNumber evidence="1">2.8.1.13</ecNumber>
    </recommendedName>
</protein>
<keyword id="KW-0067">ATP-binding</keyword>
<keyword id="KW-0963">Cytoplasm</keyword>
<keyword id="KW-1015">Disulfide bond</keyword>
<keyword id="KW-0547">Nucleotide-binding</keyword>
<keyword id="KW-1185">Reference proteome</keyword>
<keyword id="KW-0694">RNA-binding</keyword>
<keyword id="KW-0808">Transferase</keyword>
<keyword id="KW-0819">tRNA processing</keyword>
<keyword id="KW-0820">tRNA-binding</keyword>
<dbReference type="EC" id="2.8.1.13" evidence="1"/>
<dbReference type="EMBL" id="CP000142">
    <property type="protein sequence ID" value="ABA89099.1"/>
    <property type="molecule type" value="Genomic_DNA"/>
</dbReference>
<dbReference type="RefSeq" id="WP_011341601.1">
    <property type="nucleotide sequence ID" value="NC_007498.2"/>
</dbReference>
<dbReference type="SMR" id="Q3A3F8"/>
<dbReference type="STRING" id="338963.Pcar_1858"/>
<dbReference type="KEGG" id="pca:Pcar_1858"/>
<dbReference type="eggNOG" id="COG0482">
    <property type="taxonomic scope" value="Bacteria"/>
</dbReference>
<dbReference type="HOGENOM" id="CLU_035188_0_0_7"/>
<dbReference type="OrthoDB" id="9800696at2"/>
<dbReference type="Proteomes" id="UP000002534">
    <property type="component" value="Chromosome"/>
</dbReference>
<dbReference type="GO" id="GO:0005737">
    <property type="term" value="C:cytoplasm"/>
    <property type="evidence" value="ECO:0007669"/>
    <property type="project" value="UniProtKB-SubCell"/>
</dbReference>
<dbReference type="GO" id="GO:0005524">
    <property type="term" value="F:ATP binding"/>
    <property type="evidence" value="ECO:0007669"/>
    <property type="project" value="UniProtKB-KW"/>
</dbReference>
<dbReference type="GO" id="GO:0000049">
    <property type="term" value="F:tRNA binding"/>
    <property type="evidence" value="ECO:0007669"/>
    <property type="project" value="UniProtKB-KW"/>
</dbReference>
<dbReference type="GO" id="GO:0103016">
    <property type="term" value="F:tRNA-uridine 2-sulfurtransferase activity"/>
    <property type="evidence" value="ECO:0007669"/>
    <property type="project" value="UniProtKB-EC"/>
</dbReference>
<dbReference type="GO" id="GO:0002143">
    <property type="term" value="P:tRNA wobble position uridine thiolation"/>
    <property type="evidence" value="ECO:0007669"/>
    <property type="project" value="TreeGrafter"/>
</dbReference>
<dbReference type="CDD" id="cd01998">
    <property type="entry name" value="MnmA_TRMU-like"/>
    <property type="match status" value="1"/>
</dbReference>
<dbReference type="FunFam" id="2.30.30.280:FF:000001">
    <property type="entry name" value="tRNA-specific 2-thiouridylase MnmA"/>
    <property type="match status" value="1"/>
</dbReference>
<dbReference type="FunFam" id="2.40.30.10:FF:000023">
    <property type="entry name" value="tRNA-specific 2-thiouridylase MnmA"/>
    <property type="match status" value="1"/>
</dbReference>
<dbReference type="FunFam" id="3.40.50.620:FF:000115">
    <property type="entry name" value="tRNA-specific 2-thiouridylase MnmA"/>
    <property type="match status" value="1"/>
</dbReference>
<dbReference type="Gene3D" id="2.30.30.280">
    <property type="entry name" value="Adenine nucleotide alpha hydrolases-like domains"/>
    <property type="match status" value="1"/>
</dbReference>
<dbReference type="Gene3D" id="3.40.50.620">
    <property type="entry name" value="HUPs"/>
    <property type="match status" value="1"/>
</dbReference>
<dbReference type="Gene3D" id="2.40.30.10">
    <property type="entry name" value="Translation factors"/>
    <property type="match status" value="1"/>
</dbReference>
<dbReference type="HAMAP" id="MF_00144">
    <property type="entry name" value="tRNA_thiouridyl_MnmA"/>
    <property type="match status" value="1"/>
</dbReference>
<dbReference type="InterPro" id="IPR004506">
    <property type="entry name" value="MnmA-like"/>
</dbReference>
<dbReference type="InterPro" id="IPR046885">
    <property type="entry name" value="MnmA-like_C"/>
</dbReference>
<dbReference type="InterPro" id="IPR046884">
    <property type="entry name" value="MnmA-like_central"/>
</dbReference>
<dbReference type="InterPro" id="IPR023382">
    <property type="entry name" value="MnmA-like_central_sf"/>
</dbReference>
<dbReference type="InterPro" id="IPR014729">
    <property type="entry name" value="Rossmann-like_a/b/a_fold"/>
</dbReference>
<dbReference type="NCBIfam" id="NF001138">
    <property type="entry name" value="PRK00143.1"/>
    <property type="match status" value="1"/>
</dbReference>
<dbReference type="NCBIfam" id="TIGR00420">
    <property type="entry name" value="trmU"/>
    <property type="match status" value="1"/>
</dbReference>
<dbReference type="PANTHER" id="PTHR11933:SF5">
    <property type="entry name" value="MITOCHONDRIAL TRNA-SPECIFIC 2-THIOURIDYLASE 1"/>
    <property type="match status" value="1"/>
</dbReference>
<dbReference type="PANTHER" id="PTHR11933">
    <property type="entry name" value="TRNA 5-METHYLAMINOMETHYL-2-THIOURIDYLATE -METHYLTRANSFERASE"/>
    <property type="match status" value="1"/>
</dbReference>
<dbReference type="Pfam" id="PF03054">
    <property type="entry name" value="tRNA_Me_trans"/>
    <property type="match status" value="1"/>
</dbReference>
<dbReference type="Pfam" id="PF20258">
    <property type="entry name" value="tRNA_Me_trans_C"/>
    <property type="match status" value="1"/>
</dbReference>
<dbReference type="Pfam" id="PF20259">
    <property type="entry name" value="tRNA_Me_trans_M"/>
    <property type="match status" value="1"/>
</dbReference>
<dbReference type="SUPFAM" id="SSF52402">
    <property type="entry name" value="Adenine nucleotide alpha hydrolases-like"/>
    <property type="match status" value="1"/>
</dbReference>
<gene>
    <name evidence="1" type="primary">mnmA</name>
    <name type="ordered locus">Pcar_1858</name>
</gene>
<organism>
    <name type="scientific">Syntrophotalea carbinolica (strain DSM 2380 / NBRC 103641 / GraBd1)</name>
    <name type="common">Pelobacter carbinolicus</name>
    <dbReference type="NCBI Taxonomy" id="338963"/>
    <lineage>
        <taxon>Bacteria</taxon>
        <taxon>Pseudomonadati</taxon>
        <taxon>Thermodesulfobacteriota</taxon>
        <taxon>Desulfuromonadia</taxon>
        <taxon>Desulfuromonadales</taxon>
        <taxon>Syntrophotaleaceae</taxon>
        <taxon>Syntrophotalea</taxon>
    </lineage>
</organism>
<sequence length="352" mass="39255">MKEKNKHILVAMSGGVDSTVAAALLLAQGHQVSGVTMRVWDTEPLGDGREPAHIRDARKVAFDLGIPLHVVDLREEFLQQVVTPFCEEYLSGRTPNPCVLCNRVFKFSRLLREADRLGADALATGHYARIVEHDGLKVLAKGSNRQKDQSYFLFTLTQQQLQRVVFPLGEMSKEEVRTHAERLGLHVAQKGDSQDICFIPDGDYIGFLERQSHATDTEGSIVHVSGKRLGKHRGAYRFTVGQRRGLGIAWPEPLYVVAIDAAKKQVIVGEKEHLHVDRLVTTGTNWIVAQPQQPLQARCRIRYRHQEAPCTLVVLGNDRVEVRFDEPQSGVSPGQAAVFYDEDRVLGGGWIA</sequence>
<comment type="function">
    <text evidence="1">Catalyzes the 2-thiolation of uridine at the wobble position (U34) of tRNA, leading to the formation of s(2)U34.</text>
</comment>
<comment type="catalytic activity">
    <reaction evidence="1">
        <text>S-sulfanyl-L-cysteinyl-[protein] + uridine(34) in tRNA + AH2 + ATP = 2-thiouridine(34) in tRNA + L-cysteinyl-[protein] + A + AMP + diphosphate + H(+)</text>
        <dbReference type="Rhea" id="RHEA:47032"/>
        <dbReference type="Rhea" id="RHEA-COMP:10131"/>
        <dbReference type="Rhea" id="RHEA-COMP:11726"/>
        <dbReference type="Rhea" id="RHEA-COMP:11727"/>
        <dbReference type="Rhea" id="RHEA-COMP:11728"/>
        <dbReference type="ChEBI" id="CHEBI:13193"/>
        <dbReference type="ChEBI" id="CHEBI:15378"/>
        <dbReference type="ChEBI" id="CHEBI:17499"/>
        <dbReference type="ChEBI" id="CHEBI:29950"/>
        <dbReference type="ChEBI" id="CHEBI:30616"/>
        <dbReference type="ChEBI" id="CHEBI:33019"/>
        <dbReference type="ChEBI" id="CHEBI:61963"/>
        <dbReference type="ChEBI" id="CHEBI:65315"/>
        <dbReference type="ChEBI" id="CHEBI:87170"/>
        <dbReference type="ChEBI" id="CHEBI:456215"/>
        <dbReference type="EC" id="2.8.1.13"/>
    </reaction>
</comment>
<comment type="subcellular location">
    <subcellularLocation>
        <location evidence="1">Cytoplasm</location>
    </subcellularLocation>
</comment>
<comment type="similarity">
    <text evidence="1">Belongs to the MnmA/TRMU family.</text>
</comment>
<feature type="chain" id="PRO_0000349731" description="tRNA-specific 2-thiouridylase MnmA">
    <location>
        <begin position="1"/>
        <end position="352"/>
    </location>
</feature>
<feature type="region of interest" description="Interaction with tRNA" evidence="1">
    <location>
        <begin position="147"/>
        <end position="149"/>
    </location>
</feature>
<feature type="region of interest" description="Interaction with tRNA" evidence="1">
    <location>
        <begin position="302"/>
        <end position="303"/>
    </location>
</feature>
<feature type="active site" description="Nucleophile" evidence="1">
    <location>
        <position position="101"/>
    </location>
</feature>
<feature type="active site" description="Cysteine persulfide intermediate" evidence="1">
    <location>
        <position position="197"/>
    </location>
</feature>
<feature type="binding site" evidence="1">
    <location>
        <begin position="11"/>
        <end position="18"/>
    </location>
    <ligand>
        <name>ATP</name>
        <dbReference type="ChEBI" id="CHEBI:30616"/>
    </ligand>
</feature>
<feature type="binding site" evidence="1">
    <location>
        <position position="37"/>
    </location>
    <ligand>
        <name>ATP</name>
        <dbReference type="ChEBI" id="CHEBI:30616"/>
    </ligand>
</feature>
<feature type="binding site" evidence="1">
    <location>
        <position position="125"/>
    </location>
    <ligand>
        <name>ATP</name>
        <dbReference type="ChEBI" id="CHEBI:30616"/>
    </ligand>
</feature>
<feature type="site" description="Interaction with tRNA" evidence="1">
    <location>
        <position position="126"/>
    </location>
</feature>
<feature type="site" description="Interaction with tRNA" evidence="1">
    <location>
        <position position="335"/>
    </location>
</feature>
<feature type="disulfide bond" description="Alternate" evidence="1">
    <location>
        <begin position="101"/>
        <end position="197"/>
    </location>
</feature>